<reference key="1">
    <citation type="journal article" date="2003" name="J. Biol. Chem.">
        <title>In vivo cloning and characterization of a new growth suppressor protein TOE1 as a direct target gene of Egr1.</title>
        <authorList>
            <person name="De Belle I."/>
            <person name="Wu J.-X."/>
            <person name="Sperandio S."/>
            <person name="Mercola D."/>
            <person name="Adamson E.D."/>
        </authorList>
    </citation>
    <scope>NUCLEOTIDE SEQUENCE [MRNA] (ISOFORM 1)</scope>
    <scope>SUBCELLULAR LOCATION</scope>
    <scope>NUCLEAR LOCALIZATION SIGNAL</scope>
    <scope>FUNCTION</scope>
</reference>
<reference key="2">
    <citation type="journal article" date="2004" name="Nat. Genet.">
        <title>Complete sequencing and characterization of 21,243 full-length human cDNAs.</title>
        <authorList>
            <person name="Ota T."/>
            <person name="Suzuki Y."/>
            <person name="Nishikawa T."/>
            <person name="Otsuki T."/>
            <person name="Sugiyama T."/>
            <person name="Irie R."/>
            <person name="Wakamatsu A."/>
            <person name="Hayashi K."/>
            <person name="Sato H."/>
            <person name="Nagai K."/>
            <person name="Kimura K."/>
            <person name="Makita H."/>
            <person name="Sekine M."/>
            <person name="Obayashi M."/>
            <person name="Nishi T."/>
            <person name="Shibahara T."/>
            <person name="Tanaka T."/>
            <person name="Ishii S."/>
            <person name="Yamamoto J."/>
            <person name="Saito K."/>
            <person name="Kawai Y."/>
            <person name="Isono Y."/>
            <person name="Nakamura Y."/>
            <person name="Nagahari K."/>
            <person name="Murakami K."/>
            <person name="Yasuda T."/>
            <person name="Iwayanagi T."/>
            <person name="Wagatsuma M."/>
            <person name="Shiratori A."/>
            <person name="Sudo H."/>
            <person name="Hosoiri T."/>
            <person name="Kaku Y."/>
            <person name="Kodaira H."/>
            <person name="Kondo H."/>
            <person name="Sugawara M."/>
            <person name="Takahashi M."/>
            <person name="Kanda K."/>
            <person name="Yokoi T."/>
            <person name="Furuya T."/>
            <person name="Kikkawa E."/>
            <person name="Omura Y."/>
            <person name="Abe K."/>
            <person name="Kamihara K."/>
            <person name="Katsuta N."/>
            <person name="Sato K."/>
            <person name="Tanikawa M."/>
            <person name="Yamazaki M."/>
            <person name="Ninomiya K."/>
            <person name="Ishibashi T."/>
            <person name="Yamashita H."/>
            <person name="Murakawa K."/>
            <person name="Fujimori K."/>
            <person name="Tanai H."/>
            <person name="Kimata M."/>
            <person name="Watanabe M."/>
            <person name="Hiraoka S."/>
            <person name="Chiba Y."/>
            <person name="Ishida S."/>
            <person name="Ono Y."/>
            <person name="Takiguchi S."/>
            <person name="Watanabe S."/>
            <person name="Yosida M."/>
            <person name="Hotuta T."/>
            <person name="Kusano J."/>
            <person name="Kanehori K."/>
            <person name="Takahashi-Fujii A."/>
            <person name="Hara H."/>
            <person name="Tanase T.-O."/>
            <person name="Nomura Y."/>
            <person name="Togiya S."/>
            <person name="Komai F."/>
            <person name="Hara R."/>
            <person name="Takeuchi K."/>
            <person name="Arita M."/>
            <person name="Imose N."/>
            <person name="Musashino K."/>
            <person name="Yuuki H."/>
            <person name="Oshima A."/>
            <person name="Sasaki N."/>
            <person name="Aotsuka S."/>
            <person name="Yoshikawa Y."/>
            <person name="Matsunawa H."/>
            <person name="Ichihara T."/>
            <person name="Shiohata N."/>
            <person name="Sano S."/>
            <person name="Moriya S."/>
            <person name="Momiyama H."/>
            <person name="Satoh N."/>
            <person name="Takami S."/>
            <person name="Terashima Y."/>
            <person name="Suzuki O."/>
            <person name="Nakagawa S."/>
            <person name="Senoh A."/>
            <person name="Mizoguchi H."/>
            <person name="Goto Y."/>
            <person name="Shimizu F."/>
            <person name="Wakebe H."/>
            <person name="Hishigaki H."/>
            <person name="Watanabe T."/>
            <person name="Sugiyama A."/>
            <person name="Takemoto M."/>
            <person name="Kawakami B."/>
            <person name="Yamazaki M."/>
            <person name="Watanabe K."/>
            <person name="Kumagai A."/>
            <person name="Itakura S."/>
            <person name="Fukuzumi Y."/>
            <person name="Fujimori Y."/>
            <person name="Komiyama M."/>
            <person name="Tashiro H."/>
            <person name="Tanigami A."/>
            <person name="Fujiwara T."/>
            <person name="Ono T."/>
            <person name="Yamada K."/>
            <person name="Fujii Y."/>
            <person name="Ozaki K."/>
            <person name="Hirao M."/>
            <person name="Ohmori Y."/>
            <person name="Kawabata A."/>
            <person name="Hikiji T."/>
            <person name="Kobatake N."/>
            <person name="Inagaki H."/>
            <person name="Ikema Y."/>
            <person name="Okamoto S."/>
            <person name="Okitani R."/>
            <person name="Kawakami T."/>
            <person name="Noguchi S."/>
            <person name="Itoh T."/>
            <person name="Shigeta K."/>
            <person name="Senba T."/>
            <person name="Matsumura K."/>
            <person name="Nakajima Y."/>
            <person name="Mizuno T."/>
            <person name="Morinaga M."/>
            <person name="Sasaki M."/>
            <person name="Togashi T."/>
            <person name="Oyama M."/>
            <person name="Hata H."/>
            <person name="Watanabe M."/>
            <person name="Komatsu T."/>
            <person name="Mizushima-Sugano J."/>
            <person name="Satoh T."/>
            <person name="Shirai Y."/>
            <person name="Takahashi Y."/>
            <person name="Nakagawa K."/>
            <person name="Okumura K."/>
            <person name="Nagase T."/>
            <person name="Nomura N."/>
            <person name="Kikuchi H."/>
            <person name="Masuho Y."/>
            <person name="Yamashita R."/>
            <person name="Nakai K."/>
            <person name="Yada T."/>
            <person name="Nakamura Y."/>
            <person name="Ohara O."/>
            <person name="Isogai T."/>
            <person name="Sugano S."/>
        </authorList>
    </citation>
    <scope>NUCLEOTIDE SEQUENCE [LARGE SCALE MRNA] (ISOFORMS 1 AND 2)</scope>
    <source>
        <tissue>Cerebellum</tissue>
    </source>
</reference>
<reference key="3">
    <citation type="submission" date="2004-06" db="EMBL/GenBank/DDBJ databases">
        <title>Cloning of human full open reading frames in Gateway(TM) system entry vector (pDONR201).</title>
        <authorList>
            <person name="Ebert L."/>
            <person name="Schick M."/>
            <person name="Neubert P."/>
            <person name="Schatten R."/>
            <person name="Henze S."/>
            <person name="Korn B."/>
        </authorList>
    </citation>
    <scope>NUCLEOTIDE SEQUENCE [LARGE SCALE MRNA] (ISOFORM 1)</scope>
</reference>
<reference key="4">
    <citation type="journal article" date="2006" name="Nature">
        <title>The DNA sequence and biological annotation of human chromosome 1.</title>
        <authorList>
            <person name="Gregory S.G."/>
            <person name="Barlow K.F."/>
            <person name="McLay K.E."/>
            <person name="Kaul R."/>
            <person name="Swarbreck D."/>
            <person name="Dunham A."/>
            <person name="Scott C.E."/>
            <person name="Howe K.L."/>
            <person name="Woodfine K."/>
            <person name="Spencer C.C.A."/>
            <person name="Jones M.C."/>
            <person name="Gillson C."/>
            <person name="Searle S."/>
            <person name="Zhou Y."/>
            <person name="Kokocinski F."/>
            <person name="McDonald L."/>
            <person name="Evans R."/>
            <person name="Phillips K."/>
            <person name="Atkinson A."/>
            <person name="Cooper R."/>
            <person name="Jones C."/>
            <person name="Hall R.E."/>
            <person name="Andrews T.D."/>
            <person name="Lloyd C."/>
            <person name="Ainscough R."/>
            <person name="Almeida J.P."/>
            <person name="Ambrose K.D."/>
            <person name="Anderson F."/>
            <person name="Andrew R.W."/>
            <person name="Ashwell R.I.S."/>
            <person name="Aubin K."/>
            <person name="Babbage A.K."/>
            <person name="Bagguley C.L."/>
            <person name="Bailey J."/>
            <person name="Beasley H."/>
            <person name="Bethel G."/>
            <person name="Bird C.P."/>
            <person name="Bray-Allen S."/>
            <person name="Brown J.Y."/>
            <person name="Brown A.J."/>
            <person name="Buckley D."/>
            <person name="Burton J."/>
            <person name="Bye J."/>
            <person name="Carder C."/>
            <person name="Chapman J.C."/>
            <person name="Clark S.Y."/>
            <person name="Clarke G."/>
            <person name="Clee C."/>
            <person name="Cobley V."/>
            <person name="Collier R.E."/>
            <person name="Corby N."/>
            <person name="Coville G.J."/>
            <person name="Davies J."/>
            <person name="Deadman R."/>
            <person name="Dunn M."/>
            <person name="Earthrowl M."/>
            <person name="Ellington A.G."/>
            <person name="Errington H."/>
            <person name="Frankish A."/>
            <person name="Frankland J."/>
            <person name="French L."/>
            <person name="Garner P."/>
            <person name="Garnett J."/>
            <person name="Gay L."/>
            <person name="Ghori M.R.J."/>
            <person name="Gibson R."/>
            <person name="Gilby L.M."/>
            <person name="Gillett W."/>
            <person name="Glithero R.J."/>
            <person name="Grafham D.V."/>
            <person name="Griffiths C."/>
            <person name="Griffiths-Jones S."/>
            <person name="Grocock R."/>
            <person name="Hammond S."/>
            <person name="Harrison E.S.I."/>
            <person name="Hart E."/>
            <person name="Haugen E."/>
            <person name="Heath P.D."/>
            <person name="Holmes S."/>
            <person name="Holt K."/>
            <person name="Howden P.J."/>
            <person name="Hunt A.R."/>
            <person name="Hunt S.E."/>
            <person name="Hunter G."/>
            <person name="Isherwood J."/>
            <person name="James R."/>
            <person name="Johnson C."/>
            <person name="Johnson D."/>
            <person name="Joy A."/>
            <person name="Kay M."/>
            <person name="Kershaw J.K."/>
            <person name="Kibukawa M."/>
            <person name="Kimberley A.M."/>
            <person name="King A."/>
            <person name="Knights A.J."/>
            <person name="Lad H."/>
            <person name="Laird G."/>
            <person name="Lawlor S."/>
            <person name="Leongamornlert D.A."/>
            <person name="Lloyd D.M."/>
            <person name="Loveland J."/>
            <person name="Lovell J."/>
            <person name="Lush M.J."/>
            <person name="Lyne R."/>
            <person name="Martin S."/>
            <person name="Mashreghi-Mohammadi M."/>
            <person name="Matthews L."/>
            <person name="Matthews N.S.W."/>
            <person name="McLaren S."/>
            <person name="Milne S."/>
            <person name="Mistry S."/>
            <person name="Moore M.J.F."/>
            <person name="Nickerson T."/>
            <person name="O'Dell C.N."/>
            <person name="Oliver K."/>
            <person name="Palmeiri A."/>
            <person name="Palmer S.A."/>
            <person name="Parker A."/>
            <person name="Patel D."/>
            <person name="Pearce A.V."/>
            <person name="Peck A.I."/>
            <person name="Pelan S."/>
            <person name="Phelps K."/>
            <person name="Phillimore B.J."/>
            <person name="Plumb R."/>
            <person name="Rajan J."/>
            <person name="Raymond C."/>
            <person name="Rouse G."/>
            <person name="Saenphimmachak C."/>
            <person name="Sehra H.K."/>
            <person name="Sheridan E."/>
            <person name="Shownkeen R."/>
            <person name="Sims S."/>
            <person name="Skuce C.D."/>
            <person name="Smith M."/>
            <person name="Steward C."/>
            <person name="Subramanian S."/>
            <person name="Sycamore N."/>
            <person name="Tracey A."/>
            <person name="Tromans A."/>
            <person name="Van Helmond Z."/>
            <person name="Wall M."/>
            <person name="Wallis J.M."/>
            <person name="White S."/>
            <person name="Whitehead S.L."/>
            <person name="Wilkinson J.E."/>
            <person name="Willey D.L."/>
            <person name="Williams H."/>
            <person name="Wilming L."/>
            <person name="Wray P.W."/>
            <person name="Wu Z."/>
            <person name="Coulson A."/>
            <person name="Vaudin M."/>
            <person name="Sulston J.E."/>
            <person name="Durbin R.M."/>
            <person name="Hubbard T."/>
            <person name="Wooster R."/>
            <person name="Dunham I."/>
            <person name="Carter N.P."/>
            <person name="McVean G."/>
            <person name="Ross M.T."/>
            <person name="Harrow J."/>
            <person name="Olson M.V."/>
            <person name="Beck S."/>
            <person name="Rogers J."/>
            <person name="Bentley D.R."/>
        </authorList>
    </citation>
    <scope>NUCLEOTIDE SEQUENCE [LARGE SCALE GENOMIC DNA]</scope>
</reference>
<reference key="5">
    <citation type="journal article" date="2004" name="Genome Res.">
        <title>The status, quality, and expansion of the NIH full-length cDNA project: the Mammalian Gene Collection (MGC).</title>
        <authorList>
            <consortium name="The MGC Project Team"/>
        </authorList>
    </citation>
    <scope>NUCLEOTIDE SEQUENCE [LARGE SCALE MRNA] (ISOFORM 1)</scope>
    <source>
        <tissue>Uterus</tissue>
    </source>
</reference>
<reference key="6">
    <citation type="submission" date="2009-03" db="UniProtKB">
        <authorList>
            <person name="Bienvenut W.V."/>
            <person name="Waridel P."/>
            <person name="Quadroni M."/>
        </authorList>
    </citation>
    <scope>PROTEIN SEQUENCE OF 2-56; 75-84; 96-106; 175-182; 239-249; 348-362 AND 418-439</scope>
    <scope>CLEAVAGE OF INITIATOR METHIONINE</scope>
    <scope>IDENTIFICATION BY MASS SPECTROMETRY</scope>
    <source>
        <tissue>Cervix carcinoma</tissue>
    </source>
</reference>
<reference key="7">
    <citation type="journal article" date="2006" name="Cell">
        <title>Global, in vivo, and site-specific phosphorylation dynamics in signaling networks.</title>
        <authorList>
            <person name="Olsen J.V."/>
            <person name="Blagoev B."/>
            <person name="Gnad F."/>
            <person name="Macek B."/>
            <person name="Kumar C."/>
            <person name="Mortensen P."/>
            <person name="Mann M."/>
        </authorList>
    </citation>
    <scope>PHOSPHORYLATION [LARGE SCALE ANALYSIS] AT SER-5</scope>
    <scope>IDENTIFICATION BY MASS SPECTROMETRY [LARGE SCALE ANALYSIS]</scope>
    <source>
        <tissue>Cervix carcinoma</tissue>
    </source>
</reference>
<reference key="8">
    <citation type="journal article" date="2008" name="Mol. Cell">
        <title>Kinase-selective enrichment enables quantitative phosphoproteomics of the kinome across the cell cycle.</title>
        <authorList>
            <person name="Daub H."/>
            <person name="Olsen J.V."/>
            <person name="Bairlein M."/>
            <person name="Gnad F."/>
            <person name="Oppermann F.S."/>
            <person name="Korner R."/>
            <person name="Greff Z."/>
            <person name="Keri G."/>
            <person name="Stemmann O."/>
            <person name="Mann M."/>
        </authorList>
    </citation>
    <scope>PHOSPHORYLATION [LARGE SCALE ANALYSIS] AT SER-5</scope>
    <scope>IDENTIFICATION BY MASS SPECTROMETRY [LARGE SCALE ANALYSIS]</scope>
    <source>
        <tissue>Cervix carcinoma</tissue>
    </source>
</reference>
<reference key="9">
    <citation type="journal article" date="2008" name="Proc. Natl. Acad. Sci. U.S.A.">
        <title>A quantitative atlas of mitotic phosphorylation.</title>
        <authorList>
            <person name="Dephoure N."/>
            <person name="Zhou C."/>
            <person name="Villen J."/>
            <person name="Beausoleil S.A."/>
            <person name="Bakalarski C.E."/>
            <person name="Elledge S.J."/>
            <person name="Gygi S.P."/>
        </authorList>
    </citation>
    <scope>IDENTIFICATION BY MASS SPECTROMETRY [LARGE SCALE ANALYSIS]</scope>
    <source>
        <tissue>Cervix carcinoma</tissue>
    </source>
</reference>
<reference key="10">
    <citation type="journal article" date="2009" name="Anal. Chem.">
        <title>Lys-N and trypsin cover complementary parts of the phosphoproteome in a refined SCX-based approach.</title>
        <authorList>
            <person name="Gauci S."/>
            <person name="Helbig A.O."/>
            <person name="Slijper M."/>
            <person name="Krijgsveld J."/>
            <person name="Heck A.J."/>
            <person name="Mohammed S."/>
        </authorList>
    </citation>
    <scope>ACETYLATION [LARGE SCALE ANALYSIS] AT ALA-2</scope>
    <scope>CLEAVAGE OF INITIATOR METHIONINE [LARGE SCALE ANALYSIS]</scope>
    <scope>IDENTIFICATION BY MASS SPECTROMETRY [LARGE SCALE ANALYSIS]</scope>
</reference>
<reference key="11">
    <citation type="journal article" date="2009" name="Mol. Cell. Proteomics">
        <title>Large-scale proteomics analysis of the human kinome.</title>
        <authorList>
            <person name="Oppermann F.S."/>
            <person name="Gnad F."/>
            <person name="Olsen J.V."/>
            <person name="Hornberger R."/>
            <person name="Greff Z."/>
            <person name="Keri G."/>
            <person name="Mann M."/>
            <person name="Daub H."/>
        </authorList>
    </citation>
    <scope>PHOSPHORYLATION [LARGE SCALE ANALYSIS] AT SER-5</scope>
    <scope>IDENTIFICATION BY MASS SPECTROMETRY [LARGE SCALE ANALYSIS]</scope>
</reference>
<reference key="12">
    <citation type="journal article" date="2010" name="Sci. Signal.">
        <title>Quantitative phosphoproteomics reveals widespread full phosphorylation site occupancy during mitosis.</title>
        <authorList>
            <person name="Olsen J.V."/>
            <person name="Vermeulen M."/>
            <person name="Santamaria A."/>
            <person name="Kumar C."/>
            <person name="Miller M.L."/>
            <person name="Jensen L.J."/>
            <person name="Gnad F."/>
            <person name="Cox J."/>
            <person name="Jensen T.S."/>
            <person name="Nigg E.A."/>
            <person name="Brunak S."/>
            <person name="Mann M."/>
        </authorList>
    </citation>
    <scope>PHOSPHORYLATION [LARGE SCALE ANALYSIS] AT SER-5</scope>
    <scope>IDENTIFICATION BY MASS SPECTROMETRY [LARGE SCALE ANALYSIS]</scope>
    <source>
        <tissue>Cervix carcinoma</tissue>
    </source>
</reference>
<reference key="13">
    <citation type="journal article" date="2011" name="BMC Syst. Biol.">
        <title>Initial characterization of the human central proteome.</title>
        <authorList>
            <person name="Burkard T.R."/>
            <person name="Planyavsky M."/>
            <person name="Kaupe I."/>
            <person name="Breitwieser F.P."/>
            <person name="Buerckstuemmer T."/>
            <person name="Bennett K.L."/>
            <person name="Superti-Furga G."/>
            <person name="Colinge J."/>
        </authorList>
    </citation>
    <scope>IDENTIFICATION BY MASS SPECTROMETRY [LARGE SCALE ANALYSIS]</scope>
</reference>
<reference key="14">
    <citation type="journal article" date="2011" name="Sci. Signal.">
        <title>System-wide temporal characterization of the proteome and phosphoproteome of human embryonic stem cell differentiation.</title>
        <authorList>
            <person name="Rigbolt K.T."/>
            <person name="Prokhorova T.A."/>
            <person name="Akimov V."/>
            <person name="Henningsen J."/>
            <person name="Johansen P.T."/>
            <person name="Kratchmarova I."/>
            <person name="Kassem M."/>
            <person name="Mann M."/>
            <person name="Olsen J.V."/>
            <person name="Blagoev B."/>
        </authorList>
    </citation>
    <scope>PHOSPHORYLATION [LARGE SCALE ANALYSIS] AT SER-5</scope>
    <scope>IDENTIFICATION BY MASS SPECTROMETRY [LARGE SCALE ANALYSIS]</scope>
</reference>
<reference key="15">
    <citation type="journal article" date="2013" name="J. Proteome Res.">
        <title>Toward a comprehensive characterization of a human cancer cell phosphoproteome.</title>
        <authorList>
            <person name="Zhou H."/>
            <person name="Di Palma S."/>
            <person name="Preisinger C."/>
            <person name="Peng M."/>
            <person name="Polat A.N."/>
            <person name="Heck A.J."/>
            <person name="Mohammed S."/>
        </authorList>
    </citation>
    <scope>PHOSPHORYLATION [LARGE SCALE ANALYSIS] AT SER-5; SER-358 AND SER-428</scope>
    <scope>IDENTIFICATION BY MASS SPECTROMETRY [LARGE SCALE ANALYSIS]</scope>
    <source>
        <tissue>Cervix carcinoma</tissue>
        <tissue>Erythroleukemia</tissue>
    </source>
</reference>
<reference key="16">
    <citation type="journal article" date="2014" name="J. Proteomics">
        <title>An enzyme assisted RP-RPLC approach for in-depth analysis of human liver phosphoproteome.</title>
        <authorList>
            <person name="Bian Y."/>
            <person name="Song C."/>
            <person name="Cheng K."/>
            <person name="Dong M."/>
            <person name="Wang F."/>
            <person name="Huang J."/>
            <person name="Sun D."/>
            <person name="Wang L."/>
            <person name="Ye M."/>
            <person name="Zou H."/>
        </authorList>
    </citation>
    <scope>PHOSPHORYLATION [LARGE SCALE ANALYSIS] AT SER-5</scope>
    <scope>IDENTIFICATION BY MASS SPECTROMETRY [LARGE SCALE ANALYSIS]</scope>
    <source>
        <tissue>Liver</tissue>
    </source>
</reference>
<reference key="17">
    <citation type="journal article" date="2017" name="Nat. Genet.">
        <title>Biallelic mutations in the 3' exonuclease TOE1 cause pontocerebellar hypoplasia and uncover a role in snRNA processing.</title>
        <authorList>
            <person name="Lardelli R.M."/>
            <person name="Schaffer A.E."/>
            <person name="Eggens V.R."/>
            <person name="Zaki M.S."/>
            <person name="Grainger S."/>
            <person name="Sathe S."/>
            <person name="Van Nostrand E.L."/>
            <person name="Schlachetzki Z."/>
            <person name="Rosti B."/>
            <person name="Akizu N."/>
            <person name="Scott E."/>
            <person name="Silhavy J.L."/>
            <person name="Heckman L.D."/>
            <person name="Rosti R.O."/>
            <person name="Dikoglu E."/>
            <person name="Gregor A."/>
            <person name="Guemez-Gamboa A."/>
            <person name="Musaev D."/>
            <person name="Mande R."/>
            <person name="Widjaja A."/>
            <person name="Shaw T.L."/>
            <person name="Markmiller S."/>
            <person name="Marin-Valencia I."/>
            <person name="Davies J.H."/>
            <person name="de Meirleir L."/>
            <person name="Kayserili H."/>
            <person name="Altunoglu U."/>
            <person name="Freckmann M.L."/>
            <person name="Warwick L."/>
            <person name="Chitayat D."/>
            <person name="Blaser S."/>
            <person name="Caglayan A.O."/>
            <person name="Bilguvar K."/>
            <person name="Per H."/>
            <person name="Fagerberg C."/>
            <person name="Christesen H.T."/>
            <person name="Kibaek M."/>
            <person name="Aldinger K.A."/>
            <person name="Manchester D."/>
            <person name="Matsumoto N."/>
            <person name="Muramatsu K."/>
            <person name="Saitsu H."/>
            <person name="Shiina M."/>
            <person name="Ogata K."/>
            <person name="Foulds N."/>
            <person name="Dobyns W.B."/>
            <person name="Chi N.C."/>
            <person name="Traver D."/>
            <person name="Spaccini L."/>
            <person name="Bova S.M."/>
            <person name="Gabriel S.B."/>
            <person name="Gunel M."/>
            <person name="Valente E.M."/>
            <person name="Nassogne M.C."/>
            <person name="Bennett E.J."/>
            <person name="Yeo G.W."/>
            <person name="Baas F."/>
            <person name="Lykke-Andersen J."/>
            <person name="Gleeson J.G."/>
        </authorList>
    </citation>
    <scope>INVOLVEMENT IN PCH7</scope>
    <scope>FUNCTION</scope>
    <scope>INTERACTION WITH SNRNA</scope>
    <scope>TISSUE SPECIFICITY</scope>
    <scope>VARIANTS PCH7 SER-73; THR-103; TYR-148; GLY-173; LYS-220; 231-TYR--SER-510 DEL; SER-239; TRP-253; GLN-319; TYR-319 AND PHE-496</scope>
    <scope>CHARACTERIZATION OF VARIANTS PCH7 THR-103; TYR-148; GLY-173 AND LYS-220</scope>
</reference>
<reference key="18">
    <citation type="submission" date="2006-06" db="PDB data bank">
        <title>Solution structure of the ZF-CCCH domain of target of EGR1, member 1 (nuclear).</title>
        <authorList>
            <consortium name="RIKEN structural genomics initiative (RSGI)"/>
        </authorList>
    </citation>
    <scope>STRUCTURE BY NMR OF 285-321</scope>
</reference>
<comment type="function">
    <text evidence="3 4">Inhibits cell growth rate and cell cycle. Induces CDKN1A expression as well as TGF-beta expression. Mediates the inhibitory growth effect of EGR1. Involved in the maturation of snRNAs and snRNA 3'-tail processing (PubMed:28092684).</text>
</comment>
<comment type="subunit">
    <text evidence="4">Interacts with U1, U2, U4, U5 and U6 snRNAs.</text>
</comment>
<comment type="interaction">
    <interactant intactId="EBI-717460">
        <id>Q96GM8</id>
    </interactant>
    <interactant intactId="EBI-77613">
        <id>P05067</id>
        <label>APP</label>
    </interactant>
    <organismsDiffer>false</organismsDiffer>
    <experiments>3</experiments>
</comment>
<comment type="interaction">
    <interactant intactId="EBI-717460">
        <id>Q96GM8</id>
    </interactant>
    <interactant intactId="EBI-366083">
        <id>P04637</id>
        <label>TP53</label>
    </interactant>
    <organismsDiffer>false</organismsDiffer>
    <experiments>3</experiments>
</comment>
<comment type="subcellular location">
    <subcellularLocation>
        <location evidence="3">Nucleus</location>
        <location evidence="3">Nucleolus</location>
    </subcellularLocation>
    <subcellularLocation>
        <location evidence="3">Nucleus speckle</location>
    </subcellularLocation>
    <text>Localizes to nuclear speckles.</text>
</comment>
<comment type="alternative products">
    <event type="alternative splicing"/>
    <isoform>
        <id>Q96GM8-1</id>
        <name>1</name>
        <sequence type="displayed"/>
    </isoform>
    <isoform>
        <id>Q96GM8-2</id>
        <name>2</name>
        <sequence type="described" ref="VSP_055529"/>
    </isoform>
</comment>
<comment type="tissue specificity">
    <text evidence="4">Widely expressed.</text>
</comment>
<comment type="disease" evidence="4">
    <disease id="DI-04978">
        <name>Pontocerebellar hypoplasia 7</name>
        <acronym>PCH7</acronym>
        <description>A form of pontocerebellar hypoplasia, a group of related disorders characterized by underdevelopment of the pons and the cerebellum. Pontocerebellar hypoplasia also causes impaired growth of other parts of the brain, leading to an unusually small head size. PCH7 patients manifest delayed psychomotor development, hypotonia, breathing abnormalities, and gonadal abnormalities.</description>
        <dbReference type="MIM" id="614969"/>
    </disease>
    <text>The disease is caused by variants affecting the gene represented in this entry.</text>
</comment>
<comment type="similarity">
    <text evidence="7">Belongs to the CAF1 family.</text>
</comment>
<proteinExistence type="evidence at protein level"/>
<evidence type="ECO:0000255" key="1">
    <source>
        <dbReference type="PROSITE-ProRule" id="PRU00723"/>
    </source>
</evidence>
<evidence type="ECO:0000256" key="2">
    <source>
        <dbReference type="SAM" id="MobiDB-lite"/>
    </source>
</evidence>
<evidence type="ECO:0000269" key="3">
    <source>
    </source>
</evidence>
<evidence type="ECO:0000269" key="4">
    <source>
    </source>
</evidence>
<evidence type="ECO:0000269" key="5">
    <source ref="6"/>
</evidence>
<evidence type="ECO:0000303" key="6">
    <source>
    </source>
</evidence>
<evidence type="ECO:0000305" key="7"/>
<evidence type="ECO:0007744" key="8">
    <source>
    </source>
</evidence>
<evidence type="ECO:0007744" key="9">
    <source>
    </source>
</evidence>
<evidence type="ECO:0007744" key="10">
    <source>
    </source>
</evidence>
<evidence type="ECO:0007744" key="11">
    <source>
    </source>
</evidence>
<evidence type="ECO:0007744" key="12">
    <source>
    </source>
</evidence>
<evidence type="ECO:0007744" key="13">
    <source>
    </source>
</evidence>
<evidence type="ECO:0007744" key="14">
    <source>
    </source>
</evidence>
<evidence type="ECO:0007744" key="15">
    <source>
    </source>
</evidence>
<evidence type="ECO:0007829" key="16">
    <source>
        <dbReference type="PDB" id="2FC6"/>
    </source>
</evidence>
<dbReference type="EMBL" id="AY169960">
    <property type="protein sequence ID" value="AAN75441.1"/>
    <property type="molecule type" value="mRNA"/>
</dbReference>
<dbReference type="EMBL" id="AK024011">
    <property type="protein sequence ID" value="BAB14774.1"/>
    <property type="molecule type" value="mRNA"/>
</dbReference>
<dbReference type="EMBL" id="AK293704">
    <property type="protein sequence ID" value="BAG57137.1"/>
    <property type="molecule type" value="mRNA"/>
</dbReference>
<dbReference type="EMBL" id="CR457320">
    <property type="protein sequence ID" value="CAG33601.1"/>
    <property type="molecule type" value="mRNA"/>
</dbReference>
<dbReference type="EMBL" id="AL359540">
    <property type="status" value="NOT_ANNOTATED_CDS"/>
    <property type="molecule type" value="Genomic_DNA"/>
</dbReference>
<dbReference type="EMBL" id="BC009364">
    <property type="protein sequence ID" value="AAH09364.1"/>
    <property type="molecule type" value="mRNA"/>
</dbReference>
<dbReference type="CCDS" id="CCDS521.1">
    <molecule id="Q96GM8-1"/>
</dbReference>
<dbReference type="RefSeq" id="NP_079353.3">
    <molecule id="Q96GM8-1"/>
    <property type="nucleotide sequence ID" value="NM_025077.3"/>
</dbReference>
<dbReference type="PDB" id="2FC6">
    <property type="method" value="NMR"/>
    <property type="chains" value="A=285-321"/>
</dbReference>
<dbReference type="PDBsum" id="2FC6"/>
<dbReference type="SMR" id="Q96GM8"/>
<dbReference type="BioGRID" id="125269">
    <property type="interactions" value="162"/>
</dbReference>
<dbReference type="CORUM" id="Q96GM8"/>
<dbReference type="FunCoup" id="Q96GM8">
    <property type="interactions" value="3806"/>
</dbReference>
<dbReference type="IntAct" id="Q96GM8">
    <property type="interactions" value="116"/>
</dbReference>
<dbReference type="MINT" id="Q96GM8"/>
<dbReference type="STRING" id="9606.ENSP00000361162"/>
<dbReference type="GlyGen" id="Q96GM8">
    <property type="glycosylation" value="1 site, 1 O-linked glycan (1 site)"/>
</dbReference>
<dbReference type="iPTMnet" id="Q96GM8"/>
<dbReference type="PhosphoSitePlus" id="Q96GM8"/>
<dbReference type="SwissPalm" id="Q96GM8"/>
<dbReference type="BioMuta" id="TOE1"/>
<dbReference type="DMDM" id="74751888"/>
<dbReference type="jPOST" id="Q96GM8"/>
<dbReference type="MassIVE" id="Q96GM8"/>
<dbReference type="PaxDb" id="9606-ENSP00000361162"/>
<dbReference type="PeptideAtlas" id="Q96GM8"/>
<dbReference type="ProteomicsDB" id="3971"/>
<dbReference type="ProteomicsDB" id="76647">
    <molecule id="Q96GM8-1"/>
</dbReference>
<dbReference type="Pumba" id="Q96GM8"/>
<dbReference type="Antibodypedia" id="18606">
    <property type="antibodies" value="195 antibodies from 29 providers"/>
</dbReference>
<dbReference type="DNASU" id="114034"/>
<dbReference type="Ensembl" id="ENST00000372090.6">
    <molecule id="Q96GM8-1"/>
    <property type="protein sequence ID" value="ENSP00000361162.5"/>
    <property type="gene ID" value="ENSG00000132773.12"/>
</dbReference>
<dbReference type="GeneID" id="114034"/>
<dbReference type="KEGG" id="hsa:114034"/>
<dbReference type="MANE-Select" id="ENST00000372090.6">
    <property type="protein sequence ID" value="ENSP00000361162.5"/>
    <property type="RefSeq nucleotide sequence ID" value="NM_025077.4"/>
    <property type="RefSeq protein sequence ID" value="NP_079353.3"/>
</dbReference>
<dbReference type="UCSC" id="uc009vxq.4">
    <molecule id="Q96GM8-1"/>
    <property type="organism name" value="human"/>
</dbReference>
<dbReference type="AGR" id="HGNC:15954"/>
<dbReference type="CTD" id="114034"/>
<dbReference type="DisGeNET" id="114034"/>
<dbReference type="GeneCards" id="TOE1"/>
<dbReference type="HGNC" id="HGNC:15954">
    <property type="gene designation" value="TOE1"/>
</dbReference>
<dbReference type="HPA" id="ENSG00000132773">
    <property type="expression patterns" value="Low tissue specificity"/>
</dbReference>
<dbReference type="MalaCards" id="TOE1"/>
<dbReference type="MIM" id="613931">
    <property type="type" value="gene"/>
</dbReference>
<dbReference type="MIM" id="614969">
    <property type="type" value="phenotype"/>
</dbReference>
<dbReference type="neXtProt" id="NX_Q96GM8"/>
<dbReference type="OpenTargets" id="ENSG00000132773"/>
<dbReference type="Orphanet" id="284339">
    <property type="disease" value="Pontocerebellar hypoplasia type 7"/>
</dbReference>
<dbReference type="PharmGKB" id="PA38064"/>
<dbReference type="VEuPathDB" id="HostDB:ENSG00000132773"/>
<dbReference type="eggNOG" id="KOG1990">
    <property type="taxonomic scope" value="Eukaryota"/>
</dbReference>
<dbReference type="GeneTree" id="ENSGT00940000153167"/>
<dbReference type="HOGENOM" id="CLU_044804_1_0_1"/>
<dbReference type="InParanoid" id="Q96GM8"/>
<dbReference type="OMA" id="RCCMPPT"/>
<dbReference type="OrthoDB" id="414075at2759"/>
<dbReference type="PAN-GO" id="Q96GM8">
    <property type="GO annotations" value="5 GO annotations based on evolutionary models"/>
</dbReference>
<dbReference type="PhylomeDB" id="Q96GM8"/>
<dbReference type="TreeFam" id="TF314502"/>
<dbReference type="PathwayCommons" id="Q96GM8"/>
<dbReference type="SignaLink" id="Q96GM8"/>
<dbReference type="BioGRID-ORCS" id="114034">
    <property type="hits" value="426 hits in 1160 CRISPR screens"/>
</dbReference>
<dbReference type="CD-CODE" id="6F24707C">
    <property type="entry name" value="Cajal body"/>
</dbReference>
<dbReference type="CD-CODE" id="804901D1">
    <property type="entry name" value="Nuclear speckle"/>
</dbReference>
<dbReference type="ChiTaRS" id="TOE1">
    <property type="organism name" value="human"/>
</dbReference>
<dbReference type="EvolutionaryTrace" id="Q96GM8"/>
<dbReference type="GeneWiki" id="TOE1"/>
<dbReference type="GenomeRNAi" id="114034"/>
<dbReference type="Pharos" id="Q96GM8">
    <property type="development level" value="Tbio"/>
</dbReference>
<dbReference type="PRO" id="PR:Q96GM8"/>
<dbReference type="Proteomes" id="UP000005640">
    <property type="component" value="Chromosome 1"/>
</dbReference>
<dbReference type="RNAct" id="Q96GM8">
    <property type="molecule type" value="protein"/>
</dbReference>
<dbReference type="Bgee" id="ENSG00000132773">
    <property type="expression patterns" value="Expressed in olfactory bulb and 194 other cell types or tissues"/>
</dbReference>
<dbReference type="GO" id="GO:0015030">
    <property type="term" value="C:Cajal body"/>
    <property type="evidence" value="ECO:0000314"/>
    <property type="project" value="HGNC"/>
</dbReference>
<dbReference type="GO" id="GO:0005737">
    <property type="term" value="C:cytoplasm"/>
    <property type="evidence" value="ECO:0000314"/>
    <property type="project" value="HGNC"/>
</dbReference>
<dbReference type="GO" id="GO:0016604">
    <property type="term" value="C:nuclear body"/>
    <property type="evidence" value="ECO:0000314"/>
    <property type="project" value="HPA"/>
</dbReference>
<dbReference type="GO" id="GO:0016607">
    <property type="term" value="C:nuclear speck"/>
    <property type="evidence" value="ECO:0007669"/>
    <property type="project" value="UniProtKB-SubCell"/>
</dbReference>
<dbReference type="GO" id="GO:0005730">
    <property type="term" value="C:nucleolus"/>
    <property type="evidence" value="ECO:0007669"/>
    <property type="project" value="UniProtKB-SubCell"/>
</dbReference>
<dbReference type="GO" id="GO:0005654">
    <property type="term" value="C:nucleoplasm"/>
    <property type="evidence" value="ECO:0000314"/>
    <property type="project" value="HPA"/>
</dbReference>
<dbReference type="GO" id="GO:0000175">
    <property type="term" value="F:3'-5'-RNA exonuclease activity"/>
    <property type="evidence" value="ECO:0000314"/>
    <property type="project" value="HGNC"/>
</dbReference>
<dbReference type="GO" id="GO:0004535">
    <property type="term" value="F:poly(A)-specific ribonuclease activity"/>
    <property type="evidence" value="ECO:0000314"/>
    <property type="project" value="HGNC"/>
</dbReference>
<dbReference type="GO" id="GO:0017069">
    <property type="term" value="F:snRNA binding"/>
    <property type="evidence" value="ECO:0000314"/>
    <property type="project" value="UniProtKB"/>
</dbReference>
<dbReference type="GO" id="GO:0008270">
    <property type="term" value="F:zinc ion binding"/>
    <property type="evidence" value="ECO:0007669"/>
    <property type="project" value="UniProtKB-KW"/>
</dbReference>
<dbReference type="GO" id="GO:0034472">
    <property type="term" value="P:snRNA 3'-end processing"/>
    <property type="evidence" value="ECO:0000315"/>
    <property type="project" value="UniProtKB"/>
</dbReference>
<dbReference type="FunFam" id="3.30.420.10:FF:000039">
    <property type="entry name" value="Target of EGR1 protein 1"/>
    <property type="match status" value="1"/>
</dbReference>
<dbReference type="Gene3D" id="6.10.250.3220">
    <property type="match status" value="1"/>
</dbReference>
<dbReference type="Gene3D" id="3.30.420.10">
    <property type="entry name" value="Ribonuclease H-like superfamily/Ribonuclease H"/>
    <property type="match status" value="1"/>
</dbReference>
<dbReference type="InterPro" id="IPR051181">
    <property type="entry name" value="CAF1_poly(A)_ribonucleases"/>
</dbReference>
<dbReference type="InterPro" id="IPR006941">
    <property type="entry name" value="RNase_CAF1"/>
</dbReference>
<dbReference type="InterPro" id="IPR012337">
    <property type="entry name" value="RNaseH-like_sf"/>
</dbReference>
<dbReference type="InterPro" id="IPR036397">
    <property type="entry name" value="RNaseH_sf"/>
</dbReference>
<dbReference type="InterPro" id="IPR000571">
    <property type="entry name" value="Znf_CCCH"/>
</dbReference>
<dbReference type="PANTHER" id="PTHR15092">
    <property type="entry name" value="POLY A -SPECIFIC RIBONUCLEASE/TARGET OF EGR1, MEMBER 1"/>
    <property type="match status" value="1"/>
</dbReference>
<dbReference type="PANTHER" id="PTHR15092:SF37">
    <property type="entry name" value="TARGET OF EGR1 PROTEIN 1"/>
    <property type="match status" value="1"/>
</dbReference>
<dbReference type="Pfam" id="PF04857">
    <property type="entry name" value="CAF1"/>
    <property type="match status" value="2"/>
</dbReference>
<dbReference type="Pfam" id="PF00642">
    <property type="entry name" value="zf-CCCH"/>
    <property type="match status" value="1"/>
</dbReference>
<dbReference type="SUPFAM" id="SSF53098">
    <property type="entry name" value="Ribonuclease H-like"/>
    <property type="match status" value="1"/>
</dbReference>
<dbReference type="PROSITE" id="PS50103">
    <property type="entry name" value="ZF_C3H1"/>
    <property type="match status" value="1"/>
</dbReference>
<keyword id="KW-0002">3D-structure</keyword>
<keyword id="KW-0007">Acetylation</keyword>
<keyword id="KW-0025">Alternative splicing</keyword>
<keyword id="KW-0903">Direct protein sequencing</keyword>
<keyword id="KW-0225">Disease variant</keyword>
<keyword id="KW-0479">Metal-binding</keyword>
<keyword id="KW-0523">Neurodegeneration</keyword>
<keyword id="KW-0539">Nucleus</keyword>
<keyword id="KW-0597">Phosphoprotein</keyword>
<keyword id="KW-1267">Proteomics identification</keyword>
<keyword id="KW-1185">Reference proteome</keyword>
<keyword id="KW-0862">Zinc</keyword>
<keyword id="KW-0863">Zinc-finger</keyword>
<organism>
    <name type="scientific">Homo sapiens</name>
    <name type="common">Human</name>
    <dbReference type="NCBI Taxonomy" id="9606"/>
    <lineage>
        <taxon>Eukaryota</taxon>
        <taxon>Metazoa</taxon>
        <taxon>Chordata</taxon>
        <taxon>Craniata</taxon>
        <taxon>Vertebrata</taxon>
        <taxon>Euteleostomi</taxon>
        <taxon>Mammalia</taxon>
        <taxon>Eutheria</taxon>
        <taxon>Euarchontoglires</taxon>
        <taxon>Primates</taxon>
        <taxon>Haplorrhini</taxon>
        <taxon>Catarrhini</taxon>
        <taxon>Hominidae</taxon>
        <taxon>Homo</taxon>
    </lineage>
</organism>
<name>TOE1_HUMAN</name>
<accession>Q96GM8</accession>
<accession>B4DEM6</accession>
<accession>Q6IA35</accession>
<accession>Q8IWN5</accession>
<accession>Q9H846</accession>
<gene>
    <name type="primary">TOE1</name>
</gene>
<sequence>MAADSDDGAVSAPAASDGGVSKSTTSGEELVVQVPVVDVQSNNFKEMWPSLLLAIKTANFVAVDTELSGLGDRKSLLNQCIEERYKAVCHAARTRSILSLGLACFKRQPDKGEHSYLAQVFNLTLLCMEEYVIEPKSVQFLIQHGFNFNQQYAQGIPYHKGNDKGDESQSQSVRTLFLELIRARRPLVLHNGLIDLVFLYQNFYAHLPESLGTFTADLCEMFPAGIYDTKYAAEFHARFVASYLEYAFRKCERENGKQRAAGSPHLTLEFCNYPSSMRDHIDYRCCLPPATHRPHPTSICDNFSAYGWCPLGPQCPQSHDIDLIIDTDEAAAEDKRRRRRRREKRKRALLNLPGTQTSGEAKDGPPKKQVCGDSIKPEETEQEVAADETRNLPHSKQGNKNDLEMGIKAARPEIADRATSEVPGSQASPNPVPGDGLHRAGFDAFMTGYVMAYVEVSQGPQPCSSGPWLPECHNKVYLSGKAVPLTVAKSQFSRSSKAHNQKMKLTWGSS</sequence>
<protein>
    <recommendedName>
        <fullName>Target of EGR1 protein 1</fullName>
    </recommendedName>
</protein>
<feature type="initiator methionine" description="Removed" evidence="5 11">
    <location>
        <position position="1"/>
    </location>
</feature>
<feature type="chain" id="PRO_0000270833" description="Target of EGR1 protein 1">
    <location>
        <begin position="2"/>
        <end position="510"/>
    </location>
</feature>
<feature type="zinc finger region" description="C3H1-type" evidence="1">
    <location>
        <begin position="294"/>
        <end position="322"/>
    </location>
</feature>
<feature type="region of interest" description="Disordered" evidence="2">
    <location>
        <begin position="1"/>
        <end position="23"/>
    </location>
</feature>
<feature type="region of interest" description="Disordered" evidence="2">
    <location>
        <begin position="332"/>
        <end position="402"/>
    </location>
</feature>
<feature type="region of interest" description="Disordered" evidence="2">
    <location>
        <begin position="416"/>
        <end position="435"/>
    </location>
</feature>
<feature type="region of interest" description="Disordered" evidence="2">
    <location>
        <begin position="491"/>
        <end position="510"/>
    </location>
</feature>
<feature type="short sequence motif" description="Nuclear localization signal" evidence="3">
    <location>
        <begin position="335"/>
        <end position="347"/>
    </location>
</feature>
<feature type="compositionally biased region" description="Basic residues" evidence="2">
    <location>
        <begin position="336"/>
        <end position="348"/>
    </location>
</feature>
<feature type="modified residue" description="N-acetylalanine" evidence="11">
    <location>
        <position position="2"/>
    </location>
</feature>
<feature type="modified residue" description="Phosphoserine" evidence="8 9 10 12 13 14 15">
    <location>
        <position position="5"/>
    </location>
</feature>
<feature type="modified residue" description="Phosphoserine" evidence="14">
    <location>
        <position position="358"/>
    </location>
</feature>
<feature type="modified residue" description="Phosphoserine" evidence="14">
    <location>
        <position position="428"/>
    </location>
</feature>
<feature type="splice variant" id="VSP_055529" description="In isoform 2." evidence="6">
    <original>GVSKSTTSGEELVVQVPVVDVQSNNFKEMWPSLLLAIKTANFVAVDTELSGLGDRKSLLNQCIEERYKAVCHAARTRSILSLGLACFKRQPDK</original>
    <variation>AEWAWGQEEFAEP</variation>
    <location>
        <begin position="19"/>
        <end position="111"/>
    </location>
</feature>
<feature type="sequence variant" id="VAR_078850" description="In PCH7; dbSNP:rs774056037." evidence="4">
    <original>R</original>
    <variation>S</variation>
    <location>
        <position position="73"/>
    </location>
</feature>
<feature type="sequence variant" id="VAR_078851" description="In PCH7; reduced protein levels; decreased function in snRNA 3'-end processing; dbSNP:rs371848318." evidence="4">
    <original>A</original>
    <variation>T</variation>
    <location>
        <position position="103"/>
    </location>
</feature>
<feature type="sequence variant" id="VAR_078852" description="In PCH7; reduced protein levels; decreased function in snRNA 3'-end processing; dbSNP:rs148067486." evidence="4">
    <original>F</original>
    <variation>Y</variation>
    <location>
        <position position="148"/>
    </location>
</feature>
<feature type="sequence variant" id="VAR_078853" description="In PCH7; reduced protein levels; dbSNP:rs777030573." evidence="4">
    <original>V</original>
    <variation>G</variation>
    <location>
        <position position="173"/>
    </location>
</feature>
<feature type="sequence variant" id="VAR_078809" description="In PCH7; reduced protein levels; decreased function in snRNA 3'-end processing; dbSNP:rs1570621473." evidence="4">
    <original>E</original>
    <variation>K</variation>
    <location>
        <position position="220"/>
    </location>
</feature>
<feature type="sequence variant" id="VAR_078854" description="In PCH7." evidence="4">
    <location>
        <begin position="231"/>
        <end position="510"/>
    </location>
</feature>
<feature type="sequence variant" id="VAR_078855" description="In PCH7; dbSNP:rs778263701." evidence="4">
    <original>F</original>
    <variation>S</variation>
    <location>
        <position position="239"/>
    </location>
</feature>
<feature type="sequence variant" id="VAR_078856" description="In PCH7; dbSNP:rs368182654." evidence="4">
    <original>R</original>
    <variation>W</variation>
    <location>
        <position position="253"/>
    </location>
</feature>
<feature type="sequence variant" id="VAR_078857" description="In PCH7; dbSNP:rs758153898." evidence="4">
    <original>H</original>
    <variation>Q</variation>
    <location>
        <position position="319"/>
    </location>
</feature>
<feature type="sequence variant" id="VAR_078858" description="In PCH7; dbSNP:rs750266350." evidence="4">
    <original>H</original>
    <variation>Y</variation>
    <location>
        <position position="319"/>
    </location>
</feature>
<feature type="sequence variant" id="VAR_048752" description="In dbSNP:rs9429157.">
    <original>R</original>
    <variation>H</variation>
    <location>
        <position position="341"/>
    </location>
</feature>
<feature type="sequence variant" id="VAR_061109" description="In dbSNP:rs61323219.">
    <original>E</original>
    <variation>K</variation>
    <location>
        <position position="381"/>
    </location>
</feature>
<feature type="sequence variant" id="VAR_078859" description="In PCH7; dbSNP:rs1570626350." evidence="4">
    <original>S</original>
    <variation>F</variation>
    <location>
        <position position="496"/>
    </location>
</feature>
<feature type="sequence conflict" description="In Ref. 3; CAG33601." evidence="7" ref="3">
    <original>A</original>
    <variation>T</variation>
    <location>
        <position position="12"/>
    </location>
</feature>
<feature type="sequence conflict" description="In Ref. 2; BAB14774." evidence="7" ref="2">
    <original>H</original>
    <variation>R</variation>
    <location>
        <position position="236"/>
    </location>
</feature>
<feature type="sequence conflict" description="In Ref. 1; AAN75441." evidence="7" ref="1">
    <original>D</original>
    <variation>G</variation>
    <location>
        <position position="435"/>
    </location>
</feature>
<feature type="helix" evidence="16">
    <location>
        <begin position="302"/>
        <end position="305"/>
    </location>
</feature>
<feature type="helix" evidence="16">
    <location>
        <begin position="312"/>
        <end position="314"/>
    </location>
</feature>
<feature type="strand" evidence="16">
    <location>
        <begin position="316"/>
        <end position="318"/>
    </location>
</feature>